<proteinExistence type="evidence at protein level"/>
<organism>
    <name type="scientific">Centruroides huichol</name>
    <name type="common">Scorpion</name>
    <dbReference type="NCBI Taxonomy" id="2911785"/>
    <lineage>
        <taxon>Eukaryota</taxon>
        <taxon>Metazoa</taxon>
        <taxon>Ecdysozoa</taxon>
        <taxon>Arthropoda</taxon>
        <taxon>Chelicerata</taxon>
        <taxon>Arachnida</taxon>
        <taxon>Scorpiones</taxon>
        <taxon>Buthida</taxon>
        <taxon>Buthoidea</taxon>
        <taxon>Buthidae</taxon>
        <taxon>Centruroides</taxon>
    </lineage>
</organism>
<sequence length="66" mass="7642">KEGYIVNSYTGCKYECFKLGDNDYCLRECRQQYGKGAGGYCYAFGCWCTHLYEQAVVWPLKNKTCN</sequence>
<evidence type="ECO:0000250" key="1">
    <source>
        <dbReference type="UniProtKB" id="P45662"/>
    </source>
</evidence>
<evidence type="ECO:0000255" key="2">
    <source>
        <dbReference type="PROSITE-ProRule" id="PRU01210"/>
    </source>
</evidence>
<evidence type="ECO:0000269" key="3">
    <source ref="1"/>
</evidence>
<evidence type="ECO:0000303" key="4">
    <source ref="1"/>
</evidence>
<evidence type="ECO:0000305" key="5"/>
<evidence type="ECO:0000305" key="6">
    <source ref="1"/>
</evidence>
<protein>
    <recommendedName>
        <fullName evidence="5">Beta-toxin Chui2</fullName>
    </recommendedName>
    <alternativeName>
        <fullName evidence="4">Chui2</fullName>
    </alternativeName>
</protein>
<keyword id="KW-0027">Amidation</keyword>
<keyword id="KW-0903">Direct protein sequencing</keyword>
<keyword id="KW-1015">Disulfide bond</keyword>
<keyword id="KW-0872">Ion channel impairing toxin</keyword>
<keyword id="KW-0528">Neurotoxin</keyword>
<keyword id="KW-0964">Secreted</keyword>
<keyword id="KW-0800">Toxin</keyword>
<keyword id="KW-0738">Voltage-gated sodium channel impairing toxin</keyword>
<name>SCX2_CENHU</name>
<feature type="chain" id="PRO_0000456617" description="Beta-toxin Chui2" evidence="5">
    <location>
        <begin position="1" status="less than"/>
        <end position="66"/>
    </location>
</feature>
<feature type="domain" description="LCN-type CS-alpha/beta" evidence="2">
    <location>
        <begin position="1"/>
        <end position="66"/>
    </location>
</feature>
<feature type="modified residue" description="Asparagine amide" evidence="1">
    <location>
        <position position="66"/>
    </location>
</feature>
<feature type="disulfide bond" evidence="2 3">
    <location>
        <begin position="12"/>
        <end position="65"/>
    </location>
</feature>
<feature type="disulfide bond" evidence="2 3">
    <location>
        <begin position="16"/>
        <end position="41"/>
    </location>
</feature>
<feature type="disulfide bond" evidence="2 3">
    <location>
        <begin position="25"/>
        <end position="46"/>
    </location>
</feature>
<feature type="disulfide bond" evidence="2 3">
    <location>
        <begin position="29"/>
        <end position="48"/>
    </location>
</feature>
<feature type="non-terminal residue" evidence="5">
    <location>
        <position position="1"/>
    </location>
</feature>
<comment type="function">
    <text evidence="1">Beta toxins bind voltage-independently at site-4 of sodium channels (Nav) and shift the voltage of activation toward more negative potentials thereby affecting sodium channel activation and promoting spontaneous and repetitive firing.</text>
</comment>
<comment type="subcellular location">
    <subcellularLocation>
        <location evidence="2 3">Secreted</location>
    </subcellularLocation>
</comment>
<comment type="tissue specificity">
    <text evidence="6">Expressed by the venom gland.</text>
</comment>
<comment type="domain">
    <text evidence="5">Has the structural arrangement of an alpha-helix connected to antiparallel beta-sheets by disulfide bonds (CS-alpha/beta).</text>
</comment>
<comment type="mass spectrometry" mass="7633.5" method="Electrospray" evidence="3"/>
<comment type="toxic dose">
    <text evidence="3">LD(50) is 85 ug/kg in mouse.</text>
</comment>
<comment type="miscellaneous">
    <text evidence="3">Abundance in venom is very low, approximately 0.3%.</text>
</comment>
<comment type="similarity">
    <text evidence="5">Belongs to the long (4 C-C) scorpion toxin superfamily. Sodium channel inhibitor family. Beta subfamily.</text>
</comment>
<accession>C0HM15</accession>
<reference key="1">
    <citation type="journal article" date="2022" name="Toxins">
        <title>Characterization of Four Medically Important Toxins from Centruroides huichol Scorpion Venom and Its Neutralization by a Single Recombinant Antibody Fragment.</title>
        <authorList>
            <person name="Valencia-Martinez H."/>
            <person name="Olamendi-Portugal T."/>
            <person name="Restano-Cassulini R."/>
            <person name="Serrano-Posada H."/>
            <person name="Zamudio F."/>
            <person name="Possani L.D."/>
            <person name="Riano-Umbarila L."/>
            <person name="Becerril B."/>
        </authorList>
    </citation>
    <scope>PROTEIN SEQUENCE</scope>
    <scope>SUBCELLULAR LOCATION</scope>
    <scope>TISSUE SPECIFICITY</scope>
    <scope>MASS SPECTROMETRY</scope>
    <scope>TOXIC DOSE</scope>
    <scope>DISULFIDE BOND</scope>
</reference>
<dbReference type="SMR" id="C0HM15"/>
<dbReference type="GO" id="GO:0005576">
    <property type="term" value="C:extracellular region"/>
    <property type="evidence" value="ECO:0007669"/>
    <property type="project" value="UniProtKB-SubCell"/>
</dbReference>
<dbReference type="GO" id="GO:0019871">
    <property type="term" value="F:sodium channel inhibitor activity"/>
    <property type="evidence" value="ECO:0007669"/>
    <property type="project" value="InterPro"/>
</dbReference>
<dbReference type="GO" id="GO:0090729">
    <property type="term" value="F:toxin activity"/>
    <property type="evidence" value="ECO:0007669"/>
    <property type="project" value="UniProtKB-KW"/>
</dbReference>
<dbReference type="GO" id="GO:0006952">
    <property type="term" value="P:defense response"/>
    <property type="evidence" value="ECO:0007669"/>
    <property type="project" value="InterPro"/>
</dbReference>
<dbReference type="CDD" id="cd23106">
    <property type="entry name" value="neurotoxins_LC_scorpion"/>
    <property type="match status" value="1"/>
</dbReference>
<dbReference type="FunFam" id="3.30.30.10:FF:000002">
    <property type="entry name" value="Alpha-like toxin BmK-M1"/>
    <property type="match status" value="1"/>
</dbReference>
<dbReference type="Gene3D" id="3.30.30.10">
    <property type="entry name" value="Knottin, scorpion toxin-like"/>
    <property type="match status" value="1"/>
</dbReference>
<dbReference type="InterPro" id="IPR044062">
    <property type="entry name" value="LCN-type_CS_alpha_beta_dom"/>
</dbReference>
<dbReference type="InterPro" id="IPR003614">
    <property type="entry name" value="Scorpion_toxin-like"/>
</dbReference>
<dbReference type="InterPro" id="IPR036574">
    <property type="entry name" value="Scorpion_toxin-like_sf"/>
</dbReference>
<dbReference type="InterPro" id="IPR018218">
    <property type="entry name" value="Scorpion_toxinL"/>
</dbReference>
<dbReference type="PRINTS" id="PR00285">
    <property type="entry name" value="SCORPNTOXIN"/>
</dbReference>
<dbReference type="SMART" id="SM00505">
    <property type="entry name" value="Knot1"/>
    <property type="match status" value="1"/>
</dbReference>
<dbReference type="SUPFAM" id="SSF57095">
    <property type="entry name" value="Scorpion toxin-like"/>
    <property type="match status" value="1"/>
</dbReference>
<dbReference type="PROSITE" id="PS51863">
    <property type="entry name" value="LCN_CSAB"/>
    <property type="match status" value="1"/>
</dbReference>